<protein>
    <recommendedName>
        <fullName>Phosphate acetyltransferase</fullName>
        <ecNumber>2.3.1.8</ecNumber>
    </recommendedName>
    <alternativeName>
        <fullName>Phosphotransacetylase</fullName>
    </alternativeName>
</protein>
<sequence length="351" mass="38170">MKKQHIINETFLDEILAQKLGTTYIPPTEIKDSDFDKAAKHFINLLLRADGLKPIKTAVVHPIDKESLLGAVRAAQFNVIKPILIGPQHKIESVAKVNDVDLENYQVINAEHSHEAAKKAVELAKKREVAAIMKGALHTDELMSAVVYKENGLRTERRISHAFLMAVATFPKPFIITDAAINIRPTLEDKRDIVQNAIDLMHIIKEDKQVRVAVLSAVETVTSAIPTTLDAAALSKMADRGQITNAVVDGPLAFDNAISLFAAEAKGISSPVSGNADILVVPDLESGNMLAKQLKYLGQAVMAGIVLGARVPIILTSRADPIDMRVISCVLASFIYNQTKAKLHNSSKSII</sequence>
<name>PTAS_RICPR</name>
<accession>Q9ZE39</accession>
<gene>
    <name type="primary">pta</name>
    <name type="ordered locus">RP109</name>
</gene>
<feature type="chain" id="PRO_0000179138" description="Phosphate acetyltransferase">
    <location>
        <begin position="1"/>
        <end position="351"/>
    </location>
</feature>
<keyword id="KW-0012">Acyltransferase</keyword>
<keyword id="KW-0963">Cytoplasm</keyword>
<keyword id="KW-1185">Reference proteome</keyword>
<keyword id="KW-0808">Transferase</keyword>
<organism>
    <name type="scientific">Rickettsia prowazekii (strain Madrid E)</name>
    <dbReference type="NCBI Taxonomy" id="272947"/>
    <lineage>
        <taxon>Bacteria</taxon>
        <taxon>Pseudomonadati</taxon>
        <taxon>Pseudomonadota</taxon>
        <taxon>Alphaproteobacteria</taxon>
        <taxon>Rickettsiales</taxon>
        <taxon>Rickettsiaceae</taxon>
        <taxon>Rickettsieae</taxon>
        <taxon>Rickettsia</taxon>
        <taxon>typhus group</taxon>
    </lineage>
</organism>
<comment type="catalytic activity">
    <reaction>
        <text>acetyl-CoA + phosphate = acetyl phosphate + CoA</text>
        <dbReference type="Rhea" id="RHEA:19521"/>
        <dbReference type="ChEBI" id="CHEBI:22191"/>
        <dbReference type="ChEBI" id="CHEBI:43474"/>
        <dbReference type="ChEBI" id="CHEBI:57287"/>
        <dbReference type="ChEBI" id="CHEBI:57288"/>
        <dbReference type="EC" id="2.3.1.8"/>
    </reaction>
</comment>
<comment type="pathway">
    <text>Metabolic intermediate biosynthesis; acetyl-CoA biosynthesis; acetyl-CoA from acetate: step 2/2.</text>
</comment>
<comment type="subcellular location">
    <subcellularLocation>
        <location evidence="1">Cytoplasm</location>
    </subcellularLocation>
</comment>
<comment type="similarity">
    <text evidence="1">Belongs to the phosphate acetyltransferase and butyryltransferase family.</text>
</comment>
<dbReference type="EC" id="2.3.1.8"/>
<dbReference type="EMBL" id="AJ235270">
    <property type="protein sequence ID" value="CAA14578.1"/>
    <property type="molecule type" value="Genomic_DNA"/>
</dbReference>
<dbReference type="PIR" id="C71720">
    <property type="entry name" value="C71720"/>
</dbReference>
<dbReference type="RefSeq" id="NP_220501.1">
    <property type="nucleotide sequence ID" value="NC_000963.1"/>
</dbReference>
<dbReference type="RefSeq" id="WP_004597142.1">
    <property type="nucleotide sequence ID" value="NC_000963.1"/>
</dbReference>
<dbReference type="SMR" id="Q9ZE39"/>
<dbReference type="STRING" id="272947.gene:17555192"/>
<dbReference type="EnsemblBacteria" id="CAA14578">
    <property type="protein sequence ID" value="CAA14578"/>
    <property type="gene ID" value="CAA14578"/>
</dbReference>
<dbReference type="KEGG" id="rpr:RP109"/>
<dbReference type="PATRIC" id="fig|272947.5.peg.111"/>
<dbReference type="eggNOG" id="COG0280">
    <property type="taxonomic scope" value="Bacteria"/>
</dbReference>
<dbReference type="HOGENOM" id="CLU_056531_1_0_5"/>
<dbReference type="OrthoDB" id="9800237at2"/>
<dbReference type="UniPathway" id="UPA00340">
    <property type="reaction ID" value="UER00459"/>
</dbReference>
<dbReference type="Proteomes" id="UP000002480">
    <property type="component" value="Chromosome"/>
</dbReference>
<dbReference type="GO" id="GO:0005737">
    <property type="term" value="C:cytoplasm"/>
    <property type="evidence" value="ECO:0007669"/>
    <property type="project" value="UniProtKB-SubCell"/>
</dbReference>
<dbReference type="GO" id="GO:0008959">
    <property type="term" value="F:phosphate acetyltransferase activity"/>
    <property type="evidence" value="ECO:0007669"/>
    <property type="project" value="UniProtKB-EC"/>
</dbReference>
<dbReference type="GO" id="GO:0006085">
    <property type="term" value="P:acetyl-CoA biosynthetic process"/>
    <property type="evidence" value="ECO:0007669"/>
    <property type="project" value="UniProtKB-UniPathway"/>
</dbReference>
<dbReference type="Gene3D" id="3.40.718.10">
    <property type="entry name" value="Isopropylmalate Dehydrogenase"/>
    <property type="match status" value="1"/>
</dbReference>
<dbReference type="InterPro" id="IPR012147">
    <property type="entry name" value="P_Ac_Bu_trans"/>
</dbReference>
<dbReference type="InterPro" id="IPR050500">
    <property type="entry name" value="Phos_Acetyltrans/Butyryltrans"/>
</dbReference>
<dbReference type="InterPro" id="IPR002505">
    <property type="entry name" value="PTA_PTB"/>
</dbReference>
<dbReference type="NCBIfam" id="NF006045">
    <property type="entry name" value="PRK08190.1"/>
    <property type="match status" value="1"/>
</dbReference>
<dbReference type="NCBIfam" id="NF008852">
    <property type="entry name" value="PRK11890.1"/>
    <property type="match status" value="1"/>
</dbReference>
<dbReference type="PANTHER" id="PTHR43356">
    <property type="entry name" value="PHOSPHATE ACETYLTRANSFERASE"/>
    <property type="match status" value="1"/>
</dbReference>
<dbReference type="PANTHER" id="PTHR43356:SF2">
    <property type="entry name" value="PHOSPHATE ACETYLTRANSFERASE"/>
    <property type="match status" value="1"/>
</dbReference>
<dbReference type="Pfam" id="PF01515">
    <property type="entry name" value="PTA_PTB"/>
    <property type="match status" value="1"/>
</dbReference>
<dbReference type="PIRSF" id="PIRSF000428">
    <property type="entry name" value="P_Ac_trans"/>
    <property type="match status" value="1"/>
</dbReference>
<dbReference type="SUPFAM" id="SSF53659">
    <property type="entry name" value="Isocitrate/Isopropylmalate dehydrogenase-like"/>
    <property type="match status" value="1"/>
</dbReference>
<proteinExistence type="inferred from homology"/>
<reference key="1">
    <citation type="journal article" date="1998" name="Nature">
        <title>The genome sequence of Rickettsia prowazekii and the origin of mitochondria.</title>
        <authorList>
            <person name="Andersson S.G.E."/>
            <person name="Zomorodipour A."/>
            <person name="Andersson J.O."/>
            <person name="Sicheritz-Ponten T."/>
            <person name="Alsmark U.C.M."/>
            <person name="Podowski R.M."/>
            <person name="Naeslund A.K."/>
            <person name="Eriksson A.-S."/>
            <person name="Winkler H.H."/>
            <person name="Kurland C.G."/>
        </authorList>
    </citation>
    <scope>NUCLEOTIDE SEQUENCE [LARGE SCALE GENOMIC DNA]</scope>
    <source>
        <strain>Madrid E</strain>
    </source>
</reference>
<evidence type="ECO:0000305" key="1"/>